<protein>
    <recommendedName>
        <fullName evidence="1">Cell division protein ZipA</fullName>
    </recommendedName>
</protein>
<sequence length="328" mass="36318">MMQDLRLILIIVGAIAIIALLVHGFWTSRKERSSMFRDRPLKRMKSKRDDDSYDDDVEEDEGVGEVRVHRVNHAPGQSQEHDAPRQSPQHQYQPPYASAQPRPAAPPQPQAPMQQPVQQPVQPAPQPQQVQPSAPPVQPPQQQPAPPSQAPQPVAQPAPPPSAQTFQPAEPVVEAEPVVEEAPVVEKPQRKEAVIIMNVAAHHGSELNGEVLLNSIQQSGFKFGDMNIFHRHLSPDGSGPALFSLANMVNPGTFDPEMTDFTTPGVTIFMQVPSYGDALQNFKLMLQSAQHIADEVGGVVLDDQRRMMTPQKLREYQDRIREVMDANA</sequence>
<evidence type="ECO:0000255" key="1">
    <source>
        <dbReference type="HAMAP-Rule" id="MF_00509"/>
    </source>
</evidence>
<evidence type="ECO:0000256" key="2">
    <source>
        <dbReference type="SAM" id="MobiDB-lite"/>
    </source>
</evidence>
<keyword id="KW-0131">Cell cycle</keyword>
<keyword id="KW-0132">Cell division</keyword>
<keyword id="KW-0997">Cell inner membrane</keyword>
<keyword id="KW-1003">Cell membrane</keyword>
<keyword id="KW-0472">Membrane</keyword>
<keyword id="KW-0812">Transmembrane</keyword>
<keyword id="KW-1133">Transmembrane helix</keyword>
<name>ZIPA_SALEP</name>
<comment type="function">
    <text evidence="1">Essential cell division protein that stabilizes the FtsZ protofilaments by cross-linking them and that serves as a cytoplasmic membrane anchor for the Z ring. Also required for the recruitment to the septal ring of downstream cell division proteins.</text>
</comment>
<comment type="subunit">
    <text evidence="1">Interacts with FtsZ via their C-terminal domains.</text>
</comment>
<comment type="subcellular location">
    <subcellularLocation>
        <location evidence="1">Cell inner membrane</location>
        <topology evidence="1">Single-pass type I membrane protein</topology>
    </subcellularLocation>
    <text evidence="1">Localizes to the Z ring in an FtsZ-dependent manner.</text>
</comment>
<comment type="similarity">
    <text evidence="1">Belongs to the ZipA family.</text>
</comment>
<gene>
    <name evidence="1" type="primary">zipA</name>
    <name type="ordered locus">SEN2409</name>
</gene>
<feature type="chain" id="PRO_1000127226" description="Cell division protein ZipA">
    <location>
        <begin position="1"/>
        <end position="328"/>
    </location>
</feature>
<feature type="topological domain" description="Periplasmic" evidence="1">
    <location>
        <begin position="1"/>
        <end position="6"/>
    </location>
</feature>
<feature type="transmembrane region" description="Helical" evidence="1">
    <location>
        <begin position="7"/>
        <end position="27"/>
    </location>
</feature>
<feature type="topological domain" description="Cytoplasmic" evidence="1">
    <location>
        <begin position="28"/>
        <end position="328"/>
    </location>
</feature>
<feature type="region of interest" description="Disordered" evidence="2">
    <location>
        <begin position="42"/>
        <end position="178"/>
    </location>
</feature>
<feature type="compositionally biased region" description="Acidic residues" evidence="2">
    <location>
        <begin position="51"/>
        <end position="63"/>
    </location>
</feature>
<feature type="compositionally biased region" description="Low complexity" evidence="2">
    <location>
        <begin position="85"/>
        <end position="102"/>
    </location>
</feature>
<feature type="compositionally biased region" description="Low complexity" evidence="2">
    <location>
        <begin position="111"/>
        <end position="132"/>
    </location>
</feature>
<feature type="compositionally biased region" description="Pro residues" evidence="2">
    <location>
        <begin position="133"/>
        <end position="162"/>
    </location>
</feature>
<feature type="compositionally biased region" description="Low complexity" evidence="2">
    <location>
        <begin position="168"/>
        <end position="178"/>
    </location>
</feature>
<reference key="1">
    <citation type="journal article" date="2008" name="Genome Res.">
        <title>Comparative genome analysis of Salmonella enteritidis PT4 and Salmonella gallinarum 287/91 provides insights into evolutionary and host adaptation pathways.</title>
        <authorList>
            <person name="Thomson N.R."/>
            <person name="Clayton D.J."/>
            <person name="Windhorst D."/>
            <person name="Vernikos G."/>
            <person name="Davidson S."/>
            <person name="Churcher C."/>
            <person name="Quail M.A."/>
            <person name="Stevens M."/>
            <person name="Jones M.A."/>
            <person name="Watson M."/>
            <person name="Barron A."/>
            <person name="Layton A."/>
            <person name="Pickard D."/>
            <person name="Kingsley R.A."/>
            <person name="Bignell A."/>
            <person name="Clark L."/>
            <person name="Harris B."/>
            <person name="Ormond D."/>
            <person name="Abdellah Z."/>
            <person name="Brooks K."/>
            <person name="Cherevach I."/>
            <person name="Chillingworth T."/>
            <person name="Woodward J."/>
            <person name="Norberczak H."/>
            <person name="Lord A."/>
            <person name="Arrowsmith C."/>
            <person name="Jagels K."/>
            <person name="Moule S."/>
            <person name="Mungall K."/>
            <person name="Saunders M."/>
            <person name="Whitehead S."/>
            <person name="Chabalgoity J.A."/>
            <person name="Maskell D."/>
            <person name="Humphreys T."/>
            <person name="Roberts M."/>
            <person name="Barrow P.A."/>
            <person name="Dougan G."/>
            <person name="Parkhill J."/>
        </authorList>
    </citation>
    <scope>NUCLEOTIDE SEQUENCE [LARGE SCALE GENOMIC DNA]</scope>
    <source>
        <strain>P125109</strain>
    </source>
</reference>
<organism>
    <name type="scientific">Salmonella enteritidis PT4 (strain P125109)</name>
    <dbReference type="NCBI Taxonomy" id="550537"/>
    <lineage>
        <taxon>Bacteria</taxon>
        <taxon>Pseudomonadati</taxon>
        <taxon>Pseudomonadota</taxon>
        <taxon>Gammaproteobacteria</taxon>
        <taxon>Enterobacterales</taxon>
        <taxon>Enterobacteriaceae</taxon>
        <taxon>Salmonella</taxon>
    </lineage>
</organism>
<dbReference type="EMBL" id="AM933172">
    <property type="protein sequence ID" value="CAR33994.1"/>
    <property type="molecule type" value="Genomic_DNA"/>
</dbReference>
<dbReference type="RefSeq" id="WP_000983126.1">
    <property type="nucleotide sequence ID" value="NC_011294.1"/>
</dbReference>
<dbReference type="SMR" id="B5R3V5"/>
<dbReference type="KEGG" id="set:SEN2409"/>
<dbReference type="HOGENOM" id="CLU_030174_1_0_6"/>
<dbReference type="Proteomes" id="UP000000613">
    <property type="component" value="Chromosome"/>
</dbReference>
<dbReference type="GO" id="GO:0032153">
    <property type="term" value="C:cell division site"/>
    <property type="evidence" value="ECO:0007669"/>
    <property type="project" value="UniProtKB-UniRule"/>
</dbReference>
<dbReference type="GO" id="GO:0005886">
    <property type="term" value="C:plasma membrane"/>
    <property type="evidence" value="ECO:0007669"/>
    <property type="project" value="UniProtKB-SubCell"/>
</dbReference>
<dbReference type="GO" id="GO:0000917">
    <property type="term" value="P:division septum assembly"/>
    <property type="evidence" value="ECO:0007669"/>
    <property type="project" value="TreeGrafter"/>
</dbReference>
<dbReference type="GO" id="GO:0043093">
    <property type="term" value="P:FtsZ-dependent cytokinesis"/>
    <property type="evidence" value="ECO:0007669"/>
    <property type="project" value="UniProtKB-UniRule"/>
</dbReference>
<dbReference type="CDD" id="cd00231">
    <property type="entry name" value="ZipA"/>
    <property type="match status" value="1"/>
</dbReference>
<dbReference type="FunFam" id="3.30.1400.10:FF:000001">
    <property type="entry name" value="Cell division protein ZipA"/>
    <property type="match status" value="1"/>
</dbReference>
<dbReference type="Gene3D" id="3.30.1400.10">
    <property type="entry name" value="ZipA, C-terminal FtsZ-binding domain"/>
    <property type="match status" value="1"/>
</dbReference>
<dbReference type="HAMAP" id="MF_00509">
    <property type="entry name" value="ZipA"/>
    <property type="match status" value="1"/>
</dbReference>
<dbReference type="InterPro" id="IPR011919">
    <property type="entry name" value="Cell_div_ZipA"/>
</dbReference>
<dbReference type="InterPro" id="IPR007449">
    <property type="entry name" value="ZipA_FtsZ-bd_C"/>
</dbReference>
<dbReference type="InterPro" id="IPR036765">
    <property type="entry name" value="ZipA_FtsZ-bd_C_sf"/>
</dbReference>
<dbReference type="NCBIfam" id="TIGR02205">
    <property type="entry name" value="septum_zipA"/>
    <property type="match status" value="1"/>
</dbReference>
<dbReference type="PANTHER" id="PTHR38685">
    <property type="entry name" value="CELL DIVISION PROTEIN ZIPA"/>
    <property type="match status" value="1"/>
</dbReference>
<dbReference type="PANTHER" id="PTHR38685:SF1">
    <property type="entry name" value="CELL DIVISION PROTEIN ZIPA"/>
    <property type="match status" value="1"/>
</dbReference>
<dbReference type="Pfam" id="PF04354">
    <property type="entry name" value="ZipA_C"/>
    <property type="match status" value="1"/>
</dbReference>
<dbReference type="SMART" id="SM00771">
    <property type="entry name" value="ZipA_C"/>
    <property type="match status" value="1"/>
</dbReference>
<dbReference type="SUPFAM" id="SSF64383">
    <property type="entry name" value="Cell-division protein ZipA, C-terminal domain"/>
    <property type="match status" value="1"/>
</dbReference>
<proteinExistence type="inferred from homology"/>
<accession>B5R3V5</accession>